<feature type="chain" id="PRO_0000392906" description="Probable membrane protein Rv1733c">
    <location>
        <begin position="1"/>
        <end position="210"/>
    </location>
</feature>
<feature type="transmembrane region" description="Helical" evidence="1">
    <location>
        <begin position="43"/>
        <end position="63"/>
    </location>
</feature>
<feature type="transmembrane region" description="Helical" evidence="1">
    <location>
        <begin position="165"/>
        <end position="185"/>
    </location>
</feature>
<proteinExistence type="evidence at protein level"/>
<name>Y1733_MYCTU</name>
<protein>
    <recommendedName>
        <fullName>Probable membrane protein Rv1733c</fullName>
    </recommendedName>
</protein>
<sequence length="210" mass="22458">MIATTRDREGATMITFRLRLPCRTILRVFSRNPLVRGTDRLEAVVMLLAVTVSLLTIPFAAAAGTAVQDSRSHVYAHQAQTRHPATATVIDHEGVIDSNTTATSAPPRTKITVPARWVVNGIERSGEVNAKPGTKSGDRVGIWVDSAGQLVDEPAPPARAIADAALAALGLWLSVAAVAGALLALTRAILIRVRNASWQHDIDSLFCTQR</sequence>
<keyword id="KW-1003">Cell membrane</keyword>
<keyword id="KW-0472">Membrane</keyword>
<keyword id="KW-1185">Reference proteome</keyword>
<keyword id="KW-0812">Transmembrane</keyword>
<keyword id="KW-1133">Transmembrane helix</keyword>
<organism>
    <name type="scientific">Mycobacterium tuberculosis (strain ATCC 25618 / H37Rv)</name>
    <dbReference type="NCBI Taxonomy" id="83332"/>
    <lineage>
        <taxon>Bacteria</taxon>
        <taxon>Bacillati</taxon>
        <taxon>Actinomycetota</taxon>
        <taxon>Actinomycetes</taxon>
        <taxon>Mycobacteriales</taxon>
        <taxon>Mycobacteriaceae</taxon>
        <taxon>Mycobacterium</taxon>
        <taxon>Mycobacterium tuberculosis complex</taxon>
    </lineage>
</organism>
<dbReference type="EMBL" id="AL123456">
    <property type="protein sequence ID" value="CCP44499.1"/>
    <property type="molecule type" value="Genomic_DNA"/>
</dbReference>
<dbReference type="PIR" id="H70687">
    <property type="entry name" value="H70687"/>
</dbReference>
<dbReference type="RefSeq" id="NP_216249.1">
    <property type="nucleotide sequence ID" value="NC_000962.3"/>
</dbReference>
<dbReference type="RefSeq" id="WP_003911592.1">
    <property type="nucleotide sequence ID" value="NZ_NVQJ01000010.1"/>
</dbReference>
<dbReference type="STRING" id="83332.Rv1733c"/>
<dbReference type="PaxDb" id="83332-Rv1733c"/>
<dbReference type="DNASU" id="885214"/>
<dbReference type="GeneID" id="885214"/>
<dbReference type="KEGG" id="mtu:Rv1733c"/>
<dbReference type="KEGG" id="mtv:RVBD_1733c"/>
<dbReference type="TubercuList" id="Rv1733c"/>
<dbReference type="eggNOG" id="ENOG5032YM7">
    <property type="taxonomic scope" value="Bacteria"/>
</dbReference>
<dbReference type="InParanoid" id="P9WLS9"/>
<dbReference type="OrthoDB" id="4542680at2"/>
<dbReference type="PhylomeDB" id="P9WLS9"/>
<dbReference type="Proteomes" id="UP000001584">
    <property type="component" value="Chromosome"/>
</dbReference>
<dbReference type="GO" id="GO:0005886">
    <property type="term" value="C:plasma membrane"/>
    <property type="evidence" value="ECO:0007669"/>
    <property type="project" value="UniProtKB-SubCell"/>
</dbReference>
<dbReference type="InterPro" id="IPR039708">
    <property type="entry name" value="MT1774/Rv1733c-like"/>
</dbReference>
<dbReference type="PANTHER" id="PTHR42305">
    <property type="entry name" value="MEMBRANE PROTEIN RV1733C-RELATED"/>
    <property type="match status" value="1"/>
</dbReference>
<dbReference type="PANTHER" id="PTHR42305:SF1">
    <property type="entry name" value="MEMBRANE PROTEIN RV1733C-RELATED"/>
    <property type="match status" value="1"/>
</dbReference>
<evidence type="ECO:0000255" key="1"/>
<evidence type="ECO:0000269" key="2">
    <source>
    </source>
</evidence>
<evidence type="ECO:0000269" key="3">
    <source>
    </source>
</evidence>
<evidence type="ECO:0000269" key="4">
    <source>
    </source>
</evidence>
<evidence type="ECO:0000269" key="5">
    <source>
    </source>
</evidence>
<evidence type="ECO:0000269" key="6">
    <source>
    </source>
</evidence>
<evidence type="ECO:0000269" key="7">
    <source>
    </source>
</evidence>
<evidence type="ECO:0000305" key="8"/>
<accession>P9WLS9</accession>
<accession>L0TA85</accession>
<accession>P71991</accession>
<accession>Q8VJY0</accession>
<gene>
    <name type="ordered locus">Rv1733c</name>
</gene>
<comment type="subcellular location">
    <subcellularLocation>
        <location evidence="8">Cell membrane</location>
        <topology evidence="8">Multi-pass membrane protein</topology>
    </subcellularLocation>
</comment>
<comment type="induction">
    <text evidence="2 3 5 6">A member of the dormancy regulon. Induced in response to reduced oxygen tension (hypoxia), low levels of nitric oxide (NO) and carbon monoxide (CO). It is hoped that this regulon will give insight into the latent, or dormant phase of infection.</text>
</comment>
<comment type="biotechnology">
    <text evidence="4 7">Has strong T-cell and IFN-gamma inducing capacity in human tuberculin skin test positive patients, indicating this might be a good vaccine candidate. Has also been seen to serve as an immunogenic antigen, inducing gamma-interferon responses in whole-blood cultures from M.tuberculosis-exposed adults in Uganda, The Gambia and South Africa, also indicating this might be a good vaccine candidate.</text>
</comment>
<reference key="1">
    <citation type="journal article" date="1998" name="Nature">
        <title>Deciphering the biology of Mycobacterium tuberculosis from the complete genome sequence.</title>
        <authorList>
            <person name="Cole S.T."/>
            <person name="Brosch R."/>
            <person name="Parkhill J."/>
            <person name="Garnier T."/>
            <person name="Churcher C.M."/>
            <person name="Harris D.E."/>
            <person name="Gordon S.V."/>
            <person name="Eiglmeier K."/>
            <person name="Gas S."/>
            <person name="Barry C.E. III"/>
            <person name="Tekaia F."/>
            <person name="Badcock K."/>
            <person name="Basham D."/>
            <person name="Brown D."/>
            <person name="Chillingworth T."/>
            <person name="Connor R."/>
            <person name="Davies R.M."/>
            <person name="Devlin K."/>
            <person name="Feltwell T."/>
            <person name="Gentles S."/>
            <person name="Hamlin N."/>
            <person name="Holroyd S."/>
            <person name="Hornsby T."/>
            <person name="Jagels K."/>
            <person name="Krogh A."/>
            <person name="McLean J."/>
            <person name="Moule S."/>
            <person name="Murphy L.D."/>
            <person name="Oliver S."/>
            <person name="Osborne J."/>
            <person name="Quail M.A."/>
            <person name="Rajandream M.A."/>
            <person name="Rogers J."/>
            <person name="Rutter S."/>
            <person name="Seeger K."/>
            <person name="Skelton S."/>
            <person name="Squares S."/>
            <person name="Squares R."/>
            <person name="Sulston J.E."/>
            <person name="Taylor K."/>
            <person name="Whitehead S."/>
            <person name="Barrell B.G."/>
        </authorList>
    </citation>
    <scope>NUCLEOTIDE SEQUENCE [LARGE SCALE GENOMIC DNA]</scope>
    <source>
        <strain>ATCC 25618 / H37Rv</strain>
    </source>
</reference>
<reference key="2">
    <citation type="journal article" date="2001" name="Proc. Natl. Acad. Sci. U.S.A.">
        <title>Regulation of the Mycobacterium tuberculosis hypoxic response gene encoding alpha -crystallin.</title>
        <authorList>
            <person name="Sherman D.R."/>
            <person name="Voskuil M."/>
            <person name="Schnappinger D."/>
            <person name="Liao R."/>
            <person name="Harrell M.I."/>
            <person name="Schoolnik G.K."/>
        </authorList>
    </citation>
    <scope>INDUCTION BY HYPOXIA</scope>
    <source>
        <strain>ATCC 25618 / H37Rv</strain>
    </source>
</reference>
<reference key="3">
    <citation type="journal article" date="2003" name="J. Exp. Med.">
        <title>Inhibition of respiration by nitric oxide induces a Mycobacterium tuberculosis dormancy program.</title>
        <authorList>
            <person name="Voskuil M.I."/>
            <person name="Schnappinger D."/>
            <person name="Visconti K.C."/>
            <person name="Harrell M.I."/>
            <person name="Dolganov G.M."/>
            <person name="Sherman D.R."/>
            <person name="Schoolnik G.K."/>
        </authorList>
    </citation>
    <scope>INDUCTION BY NITRIC OXIDE (NO) AND BY HYPOXIA</scope>
    <scope>DORMANCY REGULON</scope>
    <source>
        <strain>ATCC 25618 / H37Rv</strain>
    </source>
</reference>
<reference key="4">
    <citation type="journal article" date="2006" name="Microbes Infect.">
        <title>Human T-cell responses to 25 novel antigens encoded by genes of the dormancy regulon of Mycobacterium tuberculosis.</title>
        <authorList>
            <person name="Leyten E.M."/>
            <person name="Lin M.Y."/>
            <person name="Franken K.L."/>
            <person name="Friggen A.H."/>
            <person name="Prins C."/>
            <person name="van Meijgaarden K.E."/>
            <person name="Voskuil M.I."/>
            <person name="Weldingh K."/>
            <person name="Andersen P."/>
            <person name="Schoolnik G.K."/>
            <person name="Arend S.M."/>
            <person name="Ottenhoff T.H."/>
            <person name="Klein M.R."/>
        </authorList>
    </citation>
    <scope>BIOTECHNOLOGY</scope>
</reference>
<reference key="5">
    <citation type="journal article" date="2008" name="Cell Host Microbe">
        <title>Mycobacterium tuberculosis senses host-derived carbon monoxide during macrophage infection.</title>
        <authorList>
            <person name="Shiloh M.U."/>
            <person name="Manzanillo P."/>
            <person name="Cox J.S."/>
        </authorList>
    </citation>
    <scope>INDUCTION BY CARBON MONOXIDE (CO)</scope>
    <source>
        <strain>ATCC 35801 / TMC 107 / Erdman</strain>
    </source>
</reference>
<reference key="6">
    <citation type="journal article" date="2008" name="J. Biol. Chem.">
        <title>Heme oxygenase-1-derived carbon monoxide induces the Mycobacterium tuberculosis dormancy regulon.</title>
        <authorList>
            <person name="Kumar A."/>
            <person name="Deshane J.S."/>
            <person name="Crossman D.K."/>
            <person name="Bolisetty S."/>
            <person name="Yan B.S."/>
            <person name="Kramnik I."/>
            <person name="Agarwal A."/>
            <person name="Steyn A.J."/>
        </authorList>
    </citation>
    <scope>INDUCTION BY CARBON MONOXIDE (CO)</scope>
    <scope>DORMANCY REGULON</scope>
    <source>
        <strain>ATCC 25618 / H37Rv</strain>
    </source>
</reference>
<reference key="7">
    <citation type="journal article" date="2009" name="Clin. Vaccine Immunol.">
        <title>Immunogenicity of novel DosR regulon-encoded candidate antigens of Mycobacterium tuberculosis in three high-burden populations in Africa.</title>
        <authorList>
            <person name="Black G.F."/>
            <person name="Thiel B.A."/>
            <person name="Ota M.O."/>
            <person name="Parida S.K."/>
            <person name="Adegbola R."/>
            <person name="Boom W.H."/>
            <person name="Dockrell H.M."/>
            <person name="Franken K.L."/>
            <person name="Friggen A.H."/>
            <person name="Hill P.C."/>
            <person name="Klein M.R."/>
            <person name="Lalor M.K."/>
            <person name="Mayanja H."/>
            <person name="Schoolnik G."/>
            <person name="Stanley K."/>
            <person name="Weldingh K."/>
            <person name="Kaufmann S.H."/>
            <person name="Walzl G."/>
            <person name="Ottenhoff T.H."/>
        </authorList>
    </citation>
    <scope>BIOTECHNOLOGY</scope>
</reference>